<sequence>MLIRGEDVTIPTSMVGNYPNPRWWDAQFARTWTGDQEPPDALIQESLEDAVAAIARDQERAGLDIISDGRVHGDNYAEQALYYYYRRLGYDLKGGYLGFPIYSRLHAGTLTGEVRRHGAIMVEQAKALKKATGKPTKVQYTGVQALTQATNDLHYKSSRDRAMAIAKAINEDIREVDALGVDFIQIDEFTWPYFFEDWAIEAFNAAVDGVKNAKIIAHVCWGNWGGTPAYYPDETAASGEIFDLTKRKAEATKATATGSIVPKAYEARLDVLNLESCGRRSDDLSGLHVMKNHPLPDNVSFWAGVIDVKSTITETADEVANRIRRLLEIVPADRLGVTTDCGLILLQRYIAQDKLHALVEGTKIVRAELAKAKQAA</sequence>
<accession>Q56837</accession>
<accession>A7IPY0</accession>
<keyword id="KW-0903">Direct protein sequencing</keyword>
<keyword id="KW-0456">Lyase</keyword>
<keyword id="KW-0479">Metal-binding</keyword>
<keyword id="KW-0614">Plasmid</keyword>
<keyword id="KW-1185">Reference proteome</keyword>
<keyword id="KW-0862">Zinc</keyword>
<proteinExistence type="evidence at protein level"/>
<gene>
    <name evidence="8" type="primary">xecA1</name>
    <name type="ordered locus">Xaut_4865</name>
</gene>
<gene>
    <name evidence="8" type="primary">xecA2</name>
    <name type="ordered locus">Xaut_5047</name>
</gene>
<feature type="chain" id="PRO_0000098705" description="2-hydroxypropyl-CoM lyase">
    <location>
        <begin position="1"/>
        <end position="376"/>
    </location>
</feature>
<feature type="binding site" evidence="1">
    <location>
        <position position="218"/>
    </location>
    <ligand>
        <name>Zn(2+)</name>
        <dbReference type="ChEBI" id="CHEBI:29105"/>
    </ligand>
</feature>
<feature type="binding site" evidence="11">
    <location>
        <position position="220"/>
    </location>
    <ligand>
        <name>Zn(2+)</name>
        <dbReference type="ChEBI" id="CHEBI:29105"/>
    </ligand>
</feature>
<feature type="binding site" evidence="1">
    <location>
        <position position="341"/>
    </location>
    <ligand>
        <name>Zn(2+)</name>
        <dbReference type="ChEBI" id="CHEBI:29105"/>
    </ligand>
</feature>
<feature type="mutagenesis site" description="Retains 0.06% of wild-type specific activity. Decreased binding affinity for CoM." evidence="3">
    <original>C</original>
    <variation>A</variation>
    <location>
        <position position="220"/>
    </location>
</feature>
<evidence type="ECO:0000250" key="1"/>
<evidence type="ECO:0000269" key="2">
    <source>
    </source>
</evidence>
<evidence type="ECO:0000269" key="3">
    <source>
    </source>
</evidence>
<evidence type="ECO:0000269" key="4">
    <source>
    </source>
</evidence>
<evidence type="ECO:0000269" key="5">
    <source>
    </source>
</evidence>
<evidence type="ECO:0000303" key="6">
    <source>
    </source>
</evidence>
<evidence type="ECO:0000303" key="7">
    <source>
    </source>
</evidence>
<evidence type="ECO:0000303" key="8">
    <source>
    </source>
</evidence>
<evidence type="ECO:0000303" key="9">
    <source>
    </source>
</evidence>
<evidence type="ECO:0000305" key="10"/>
<evidence type="ECO:0000305" key="11">
    <source>
    </source>
</evidence>
<reference key="1">
    <citation type="journal article" date="1995" name="Microbiology">
        <title>Complementation of Xanthobacter Py2 mutants in epoxyalkane degradation; expression and nucleotide sequence of the complementing DNA fragment.</title>
        <authorList>
            <person name="Swaving J."/>
            <person name="Weijers C.A.G.M."/>
            <person name="van Ooyen A.J.J."/>
            <person name="de Bont J.A.M."/>
        </authorList>
    </citation>
    <scope>NUCLEOTIDE SEQUENCE [GENOMIC DNA]</scope>
    <source>
        <strain>ATCC BAA-1158 / Py2</strain>
    </source>
</reference>
<reference key="2">
    <citation type="submission" date="2007-07" db="EMBL/GenBank/DDBJ databases">
        <title>Complete sequence of plasmid pXAUT01 of Xanthobacter autotrophicus Py2.</title>
        <authorList>
            <consortium name="US DOE Joint Genome Institute"/>
            <person name="Copeland A."/>
            <person name="Lucas S."/>
            <person name="Lapidus A."/>
            <person name="Barry K."/>
            <person name="Glavina del Rio T."/>
            <person name="Hammon N."/>
            <person name="Israni S."/>
            <person name="Dalin E."/>
            <person name="Tice H."/>
            <person name="Pitluck S."/>
            <person name="Sims D."/>
            <person name="Brettin T."/>
            <person name="Bruce D."/>
            <person name="Detter J.C."/>
            <person name="Han C."/>
            <person name="Tapia R."/>
            <person name="Brainard J."/>
            <person name="Schmutz J."/>
            <person name="Larimer F."/>
            <person name="Land M."/>
            <person name="Hauser L."/>
            <person name="Kyrpides N."/>
            <person name="Kim E."/>
            <person name="Ensigns S.A."/>
            <person name="Richardson P."/>
        </authorList>
    </citation>
    <scope>NUCLEOTIDE SEQUENCE [LARGE SCALE GENOMIC DNA]</scope>
    <source>
        <strain>ATCC BAA-1158 / Py2</strain>
    </source>
</reference>
<reference key="3">
    <citation type="journal article" date="1997" name="J. Biol. Chem.">
        <title>Purification to homogeneity and reconstitution of the individual components of the epoxide carboxylase multiprotein enzyme complex from Xanthobacter strain Py2.</title>
        <authorList>
            <person name="Allen J.R."/>
            <person name="Ensign S.A."/>
        </authorList>
    </citation>
    <scope>PROTEIN SEQUENCE OF 1-12</scope>
    <scope>FUNCTION</scope>
    <scope>COFACTOR</scope>
    <scope>ACTIVITY REGULATION</scope>
    <scope>PATHWAY</scope>
    <scope>SUBUNIT</scope>
    <source>
        <strain>ATCC BAA-1158 / Py2</strain>
    </source>
</reference>
<reference key="4">
    <citation type="journal article" date="1999" name="Proc. Natl. Acad. Sci. U.S.A.">
        <title>A role for coenzyme M (2-mercaptoethanesulfonic acid) in a bacterial pathway of aliphatic epoxide carboxylation.</title>
        <authorList>
            <person name="Allen J.R."/>
            <person name="Clark D.D."/>
            <person name="Krum J.G."/>
            <person name="Ensign S.A."/>
        </authorList>
    </citation>
    <scope>FUNCTION</scope>
    <scope>CATALYTIC ACTIVITY</scope>
    <scope>PATHWAY</scope>
    <scope>SUBUNIT</scope>
    <source>
        <strain>ATCC BAA-1158 / Py2</strain>
    </source>
</reference>
<reference key="5">
    <citation type="journal article" date="2002" name="Biochemistry">
        <title>Kinetic and microcalorimetric analysis of substrate and cofactor interactions in epoxyalkane:CoM transferase, a zinc-dependent epoxidase.</title>
        <authorList>
            <person name="Krum J.G."/>
            <person name="Ellsworth H."/>
            <person name="Sargeant R.R."/>
            <person name="Rich G."/>
            <person name="Ensign S.A."/>
        </authorList>
    </citation>
    <scope>FUNCTION</scope>
    <scope>CATALYTIC ACTIVITY</scope>
    <scope>COFACTOR</scope>
    <scope>ACTIVITY REGULATION</scope>
    <scope>BIOPHYSICOCHEMICAL PROPERTIES</scope>
    <scope>MUTAGENESIS OF CYS-220</scope>
    <source>
        <strain>ATCC BAA-1158 / Py2</strain>
    </source>
</reference>
<reference key="6">
    <citation type="journal article" date="2010" name="J. Biol. Chem.">
        <title>Mechanism of inhibition of aliphatic epoxide carboxylation by the coenzyme M analog 2-bromoethanesulfonate.</title>
        <authorList>
            <person name="Boyd J.M."/>
            <person name="Clark D.D."/>
            <person name="Kofoed M.A."/>
            <person name="Ensign S.A."/>
        </authorList>
    </citation>
    <scope>ACTIVITY REGULATION</scope>
    <source>
        <strain>ATCC BAA-1158 / Py2</strain>
    </source>
</reference>
<reference key="7">
    <citation type="journal article" date="2003" name="Annu. Rev. Biochem.">
        <title>Aliphatic epoxide carboxylation.</title>
        <authorList>
            <person name="Ensign S.A."/>
            <person name="Allen J.R."/>
        </authorList>
    </citation>
    <scope>REVIEW</scope>
</reference>
<dbReference type="EC" id="4.4.1.23" evidence="2 3"/>
<dbReference type="EMBL" id="X79863">
    <property type="protein sequence ID" value="CAA56241.1"/>
    <property type="molecule type" value="Genomic_DNA"/>
</dbReference>
<dbReference type="EMBL" id="CP000782">
    <property type="protein sequence ID" value="ABS70076.1"/>
    <property type="molecule type" value="Genomic_DNA"/>
</dbReference>
<dbReference type="EMBL" id="CP000782">
    <property type="protein sequence ID" value="ABS70245.1"/>
    <property type="molecule type" value="Genomic_DNA"/>
</dbReference>
<dbReference type="PIR" id="S47051">
    <property type="entry name" value="S47051"/>
</dbReference>
<dbReference type="SMR" id="Q56837"/>
<dbReference type="KEGG" id="xau:Xaut_4865"/>
<dbReference type="KEGG" id="xau:Xaut_5047"/>
<dbReference type="eggNOG" id="COG0620">
    <property type="taxonomic scope" value="Bacteria"/>
</dbReference>
<dbReference type="HOGENOM" id="CLU_040013_3_0_5"/>
<dbReference type="OrthoDB" id="244285at2"/>
<dbReference type="PhylomeDB" id="Q56837"/>
<dbReference type="BioCyc" id="MetaCyc:MONOMER-7713"/>
<dbReference type="UniPathway" id="UPA00776"/>
<dbReference type="Proteomes" id="UP000002417">
    <property type="component" value="Plasmid pXAUT01"/>
</dbReference>
<dbReference type="GO" id="GO:0050555">
    <property type="term" value="F:2-hydroxypropyl-CoM lyase activity"/>
    <property type="evidence" value="ECO:0007669"/>
    <property type="project" value="UniProtKB-EC"/>
</dbReference>
<dbReference type="GO" id="GO:0003871">
    <property type="term" value="F:5-methyltetrahydropteroyltriglutamate-homocysteine S-methyltransferase activity"/>
    <property type="evidence" value="ECO:0007669"/>
    <property type="project" value="InterPro"/>
</dbReference>
<dbReference type="GO" id="GO:0008270">
    <property type="term" value="F:zinc ion binding"/>
    <property type="evidence" value="ECO:0007669"/>
    <property type="project" value="InterPro"/>
</dbReference>
<dbReference type="GO" id="GO:0009086">
    <property type="term" value="P:methionine biosynthetic process"/>
    <property type="evidence" value="ECO:0007669"/>
    <property type="project" value="InterPro"/>
</dbReference>
<dbReference type="GO" id="GO:0042208">
    <property type="term" value="P:propylene catabolic process"/>
    <property type="evidence" value="ECO:0007669"/>
    <property type="project" value="UniProtKB-UniPathway"/>
</dbReference>
<dbReference type="CDD" id="cd03311">
    <property type="entry name" value="CIMS_C_terminal_like"/>
    <property type="match status" value="1"/>
</dbReference>
<dbReference type="Gene3D" id="3.20.20.210">
    <property type="match status" value="1"/>
</dbReference>
<dbReference type="InterPro" id="IPR002629">
    <property type="entry name" value="Met_Synth_C/arc"/>
</dbReference>
<dbReference type="InterPro" id="IPR038071">
    <property type="entry name" value="UROD/MetE-like_sf"/>
</dbReference>
<dbReference type="PANTHER" id="PTHR30519">
    <property type="entry name" value="5-METHYLTETRAHYDROPTEROYLTRIGLUTAMATE--HOMOCYSTEINE METHYLTRANSFERASE"/>
    <property type="match status" value="1"/>
</dbReference>
<dbReference type="Pfam" id="PF01717">
    <property type="entry name" value="Meth_synt_2"/>
    <property type="match status" value="2"/>
</dbReference>
<dbReference type="SUPFAM" id="SSF51726">
    <property type="entry name" value="UROD/MetE-like"/>
    <property type="match status" value="1"/>
</dbReference>
<name>XECA_XANP2</name>
<geneLocation type="plasmid">
    <name>pXAUT01</name>
</geneLocation>
<comment type="function">
    <text evidence="2 3 5">Involved in aliphatic epoxide carboxylation (PubMed:10411892, PubMed:11939797, PubMed:9405410). Catalyzes the addition of coenzyme M (CoM) to either R- or S-epoxypropane to form the thioether conjugate 2-hydroxypropyl-CoM (PubMed:10411892, PubMed:11939797). Catalyzes the reaction of CoM with R-epoxypropane at a rate approximately twice of that with S-epoxypropane (PubMed:10411892). The CoM analogs 2-mercaptopropionate, 2-mercaptoethanol and cysteine substitute poorly for CoM as the thiol substrate (PubMed:11939797).</text>
</comment>
<comment type="catalytic activity">
    <reaction evidence="2 3">
        <text>(R)-2-hydroxypropyl-coenzyme M = (R)-1,2-epoxypropane + coenzyme M</text>
        <dbReference type="Rhea" id="RHEA:19421"/>
        <dbReference type="ChEBI" id="CHEBI:28985"/>
        <dbReference type="ChEBI" id="CHEBI:58319"/>
        <dbReference type="ChEBI" id="CHEBI:58458"/>
        <dbReference type="EC" id="4.4.1.23"/>
    </reaction>
    <physiologicalReaction direction="right-to-left" evidence="2 3">
        <dbReference type="Rhea" id="RHEA:19423"/>
    </physiologicalReaction>
</comment>
<comment type="catalytic activity">
    <reaction evidence="2">
        <text>(S)-2-hydroxypropyl-coenzyme M = (S)-1,2-epoxypropane + coenzyme M</text>
        <dbReference type="Rhea" id="RHEA:20904"/>
        <dbReference type="ChEBI" id="CHEBI:28982"/>
        <dbReference type="ChEBI" id="CHEBI:58319"/>
        <dbReference type="ChEBI" id="CHEBI:58430"/>
        <dbReference type="EC" id="4.4.1.23"/>
    </reaction>
    <physiologicalReaction direction="right-to-left" evidence="2">
        <dbReference type="Rhea" id="RHEA:20906"/>
    </physiologicalReaction>
</comment>
<comment type="cofactor">
    <cofactor evidence="3 5">
        <name>Zn(2+)</name>
        <dbReference type="ChEBI" id="CHEBI:29105"/>
    </cofactor>
    <text evidence="3 5">Binds 1 zinc ion per subunit (PubMed:11939797, PubMed:9405410). Zinc plays a key role in activating an organic thiol substrate for nucleophilic attack on an alkyl-donating substrate (PubMed:11939797).</text>
</comment>
<comment type="activity regulation">
    <text evidence="3 4 5">Inhibited by methylepoxypropane (PubMed:9405410). Inhibited by the zinc chelator 4-(2-pyridylazo)resorcinol (PAR), in the presence of p- (hydroxymercuri)benzenesulfonic acid (PMPS), and by EDTA (PubMed:11939797). Not inhibited by the coenzyme M analog 2-bromoethanesulfonate (BES) (PubMed:20551308).</text>
</comment>
<comment type="biophysicochemical properties">
    <kinetics>
        <KM evidence="3">1.8 uM for R-epoxypropane</KM>
        <KM evidence="3">33.6 uM for coenzyme M</KM>
        <text evidence="3">kcat is 6.5 sec(-1) with R-epoxypropane as substrate.</text>
    </kinetics>
    <phDependence>
        <text evidence="3">Optimum pH is 8.0-8.5.</text>
    </phDependence>
</comment>
<comment type="pathway">
    <text evidence="2 5">Alkene metabolism; propylene degradation.</text>
</comment>
<comment type="subunit">
    <text evidence="2 5">Homohexamer (PubMed:9405410). Component I of the aliphatic epoxide carboxylation complex together with components II, III and IV (PubMed:10411892, PubMed:9405410).</text>
</comment>
<comment type="similarity">
    <text evidence="10">Belongs to the vitamin-B12 independent methionine synthase family.</text>
</comment>
<protein>
    <recommendedName>
        <fullName evidence="10">2-hydroxypropyl-CoM lyase</fullName>
        <ecNumber evidence="2 3">4.4.1.23</ecNumber>
    </recommendedName>
    <alternativeName>
        <fullName>Aliphatic epoxide carboxylation component I</fullName>
    </alternativeName>
    <alternativeName>
        <fullName evidence="9">Epoxide carboxylase component I</fullName>
    </alternativeName>
    <alternativeName>
        <fullName evidence="6">Epoxyalkane:CoM transferase</fullName>
        <shortName evidence="7">EaCoMT</shortName>
    </alternativeName>
</protein>
<organism>
    <name type="scientific">Xanthobacter autotrophicus (strain ATCC BAA-1158 / Py2)</name>
    <dbReference type="NCBI Taxonomy" id="78245"/>
    <lineage>
        <taxon>Bacteria</taxon>
        <taxon>Pseudomonadati</taxon>
        <taxon>Pseudomonadota</taxon>
        <taxon>Alphaproteobacteria</taxon>
        <taxon>Hyphomicrobiales</taxon>
        <taxon>Xanthobacteraceae</taxon>
        <taxon>Xanthobacter</taxon>
    </lineage>
</organism>